<keyword id="KW-0416">Keratin</keyword>
<keyword id="KW-1185">Reference proteome</keyword>
<keyword id="KW-0677">Repeat</keyword>
<feature type="initiator methionine" description="Removed">
    <location>
        <position position="1"/>
    </location>
</feature>
<feature type="chain" id="PRO_0000097011" description="Claw keratin">
    <location>
        <begin position="2"/>
        <end position="128"/>
    </location>
</feature>
<feature type="repeat" description="1">
    <location>
        <begin position="83"/>
        <end position="91"/>
    </location>
</feature>
<feature type="repeat" description="2">
    <location>
        <begin position="92"/>
        <end position="100"/>
    </location>
</feature>
<feature type="repeat" description="3; approximate">
    <location>
        <begin position="101"/>
        <end position="109"/>
    </location>
</feature>
<feature type="region of interest" description="3 X 9 AA tandem repeats, Gly-rich">
    <location>
        <begin position="83"/>
        <end position="104"/>
    </location>
</feature>
<protein>
    <recommendedName>
        <fullName>Claw keratin</fullName>
        <shortName>C-ker</shortName>
        <shortName>cKer</shortName>
    </recommendedName>
</protein>
<reference key="1">
    <citation type="journal article" date="1991" name="Gene">
        <title>The structure and expression of a gene encoding chick claw keratin.</title>
        <authorList>
            <person name="Whitbread L.A."/>
            <person name="Gregg K."/>
            <person name="Rogers G.E."/>
        </authorList>
    </citation>
    <scope>NUCLEOTIDE SEQUENCE [GENOMIC DNA]</scope>
    <source>
        <strain>White leghorn</strain>
        <tissue>Embryonic claw</tissue>
    </source>
</reference>
<comment type="tissue specificity">
    <text>Abundantly expressed in the claw and at a low level in feather tissue.</text>
</comment>
<comment type="miscellaneous">
    <text>The avian keratins (F-ker, S-ker, C-ker and B-ker) are a complex mixture of very similar polypeptides.</text>
</comment>
<comment type="similarity">
    <text evidence="1">Belongs to the avian keratin family.</text>
</comment>
<sequence>MSCSSLCAPACVATPTPLADSCNEPCVRQCPDSTVVIQPPATVVTFPGPILSSFPQYAAVGSAGVPAVGSGMGGTFGRGAGFGGYGGLGGYGGYGGLGGYGGYGGFGSCGYGGFGRGYRSLLGSCGPC</sequence>
<evidence type="ECO:0000305" key="1"/>
<organism>
    <name type="scientific">Gallus gallus</name>
    <name type="common">Chicken</name>
    <dbReference type="NCBI Taxonomy" id="9031"/>
    <lineage>
        <taxon>Eukaryota</taxon>
        <taxon>Metazoa</taxon>
        <taxon>Chordata</taxon>
        <taxon>Craniata</taxon>
        <taxon>Vertebrata</taxon>
        <taxon>Euteleostomi</taxon>
        <taxon>Archelosauria</taxon>
        <taxon>Archosauria</taxon>
        <taxon>Dinosauria</taxon>
        <taxon>Saurischia</taxon>
        <taxon>Theropoda</taxon>
        <taxon>Coelurosauria</taxon>
        <taxon>Aves</taxon>
        <taxon>Neognathae</taxon>
        <taxon>Galloanserae</taxon>
        <taxon>Galliformes</taxon>
        <taxon>Phasianidae</taxon>
        <taxon>Phasianinae</taxon>
        <taxon>Gallus</taxon>
    </lineage>
</organism>
<accession>P25692</accession>
<gene>
    <name type="primary">CKER1</name>
</gene>
<dbReference type="EMBL" id="M37698">
    <property type="protein sequence ID" value="AAA62730.1"/>
    <property type="molecule type" value="Genomic_DNA"/>
</dbReference>
<dbReference type="PIR" id="JQ1002">
    <property type="entry name" value="JQ1002"/>
</dbReference>
<dbReference type="STRING" id="9031.ENSGALP00000041994"/>
<dbReference type="VEuPathDB" id="HostDB:LOC430661"/>
<dbReference type="eggNOG" id="ENOG502TE1C">
    <property type="taxonomic scope" value="Eukaryota"/>
</dbReference>
<dbReference type="InParanoid" id="P25692"/>
<dbReference type="Proteomes" id="UP000000539">
    <property type="component" value="Unassembled WGS sequence"/>
</dbReference>
<dbReference type="GO" id="GO:0005882">
    <property type="term" value="C:intermediate filament"/>
    <property type="evidence" value="ECO:0007669"/>
    <property type="project" value="UniProtKB-KW"/>
</dbReference>
<dbReference type="GO" id="GO:0005200">
    <property type="term" value="F:structural constituent of cytoskeleton"/>
    <property type="evidence" value="ECO:0007669"/>
    <property type="project" value="InterPro"/>
</dbReference>
<dbReference type="InterPro" id="IPR003461">
    <property type="entry name" value="Keratin"/>
</dbReference>
<dbReference type="PANTHER" id="PTHR31203">
    <property type="entry name" value="BETA-KERATIN-RELATED PROTEIN-RELATED"/>
    <property type="match status" value="1"/>
</dbReference>
<dbReference type="PANTHER" id="PTHR31203:SF1">
    <property type="entry name" value="BETA-KERATIN-RELATED PROTEIN-RELATED"/>
    <property type="match status" value="1"/>
</dbReference>
<dbReference type="Pfam" id="PF02422">
    <property type="entry name" value="Keratin"/>
    <property type="match status" value="1"/>
</dbReference>
<name>KRCL_CHICK</name>
<proteinExistence type="evidence at transcript level"/>